<organism>
    <name type="scientific">Lupinus cosentinii</name>
    <name type="common">West Australian blue lupine</name>
    <name type="synonym">Sandplain lupine</name>
    <dbReference type="NCBI Taxonomy" id="53222"/>
    <lineage>
        <taxon>Eukaryota</taxon>
        <taxon>Viridiplantae</taxon>
        <taxon>Streptophyta</taxon>
        <taxon>Embryophyta</taxon>
        <taxon>Tracheophyta</taxon>
        <taxon>Spermatophyta</taxon>
        <taxon>Magnoliopsida</taxon>
        <taxon>eudicotyledons</taxon>
        <taxon>Gunneridae</taxon>
        <taxon>Pentapetalae</taxon>
        <taxon>rosids</taxon>
        <taxon>fabids</taxon>
        <taxon>Fabales</taxon>
        <taxon>Fabaceae</taxon>
        <taxon>Papilionoideae</taxon>
        <taxon>50 kb inversion clade</taxon>
        <taxon>genistoids sensu lato</taxon>
        <taxon>core genistoids</taxon>
        <taxon>Genisteae</taxon>
        <taxon>Lupinus</taxon>
    </lineage>
</organism>
<accession>P69579</accession>
<accession>P92400</accession>
<accession>P92405</accession>
<gene>
    <name evidence="1" type="primary">rbcL</name>
</gene>
<dbReference type="EC" id="4.1.1.39" evidence="1"/>
<dbReference type="EMBL" id="Z70070">
    <property type="protein sequence ID" value="CAA93929.1"/>
    <property type="molecule type" value="Genomic_DNA"/>
</dbReference>
<dbReference type="SMR" id="P69579"/>
<dbReference type="GO" id="GO:0009507">
    <property type="term" value="C:chloroplast"/>
    <property type="evidence" value="ECO:0007669"/>
    <property type="project" value="UniProtKB-SubCell"/>
</dbReference>
<dbReference type="GO" id="GO:0000287">
    <property type="term" value="F:magnesium ion binding"/>
    <property type="evidence" value="ECO:0007669"/>
    <property type="project" value="InterPro"/>
</dbReference>
<dbReference type="GO" id="GO:0004497">
    <property type="term" value="F:monooxygenase activity"/>
    <property type="evidence" value="ECO:0007669"/>
    <property type="project" value="UniProtKB-KW"/>
</dbReference>
<dbReference type="GO" id="GO:0016984">
    <property type="term" value="F:ribulose-bisphosphate carboxylase activity"/>
    <property type="evidence" value="ECO:0007669"/>
    <property type="project" value="UniProtKB-EC"/>
</dbReference>
<dbReference type="GO" id="GO:0009853">
    <property type="term" value="P:photorespiration"/>
    <property type="evidence" value="ECO:0007669"/>
    <property type="project" value="UniProtKB-KW"/>
</dbReference>
<dbReference type="GO" id="GO:0019253">
    <property type="term" value="P:reductive pentose-phosphate cycle"/>
    <property type="evidence" value="ECO:0007669"/>
    <property type="project" value="UniProtKB-KW"/>
</dbReference>
<dbReference type="CDD" id="cd08212">
    <property type="entry name" value="RuBisCO_large_I"/>
    <property type="match status" value="1"/>
</dbReference>
<dbReference type="FunFam" id="3.20.20.110:FF:000001">
    <property type="entry name" value="Ribulose bisphosphate carboxylase large chain"/>
    <property type="match status" value="1"/>
</dbReference>
<dbReference type="FunFam" id="3.30.70.150:FF:000001">
    <property type="entry name" value="Ribulose bisphosphate carboxylase large chain"/>
    <property type="match status" value="1"/>
</dbReference>
<dbReference type="Gene3D" id="3.20.20.110">
    <property type="entry name" value="Ribulose bisphosphate carboxylase, large subunit, C-terminal domain"/>
    <property type="match status" value="1"/>
</dbReference>
<dbReference type="Gene3D" id="3.30.70.150">
    <property type="entry name" value="RuBisCO large subunit, N-terminal domain"/>
    <property type="match status" value="1"/>
</dbReference>
<dbReference type="HAMAP" id="MF_01338">
    <property type="entry name" value="RuBisCO_L_type1"/>
    <property type="match status" value="1"/>
</dbReference>
<dbReference type="InterPro" id="IPR033966">
    <property type="entry name" value="RuBisCO"/>
</dbReference>
<dbReference type="InterPro" id="IPR020878">
    <property type="entry name" value="RuBisCo_large_chain_AS"/>
</dbReference>
<dbReference type="InterPro" id="IPR000685">
    <property type="entry name" value="RuBisCO_lsu_C"/>
</dbReference>
<dbReference type="InterPro" id="IPR036376">
    <property type="entry name" value="RuBisCO_lsu_C_sf"/>
</dbReference>
<dbReference type="InterPro" id="IPR017443">
    <property type="entry name" value="RuBisCO_lsu_fd_N"/>
</dbReference>
<dbReference type="InterPro" id="IPR036422">
    <property type="entry name" value="RuBisCO_lsu_N_sf"/>
</dbReference>
<dbReference type="InterPro" id="IPR020888">
    <property type="entry name" value="RuBisCO_lsuI"/>
</dbReference>
<dbReference type="NCBIfam" id="NF003252">
    <property type="entry name" value="PRK04208.1"/>
    <property type="match status" value="1"/>
</dbReference>
<dbReference type="PANTHER" id="PTHR42704">
    <property type="entry name" value="RIBULOSE BISPHOSPHATE CARBOXYLASE"/>
    <property type="match status" value="1"/>
</dbReference>
<dbReference type="PANTHER" id="PTHR42704:SF16">
    <property type="entry name" value="RIBULOSE BISPHOSPHATE CARBOXYLASE LARGE CHAIN"/>
    <property type="match status" value="1"/>
</dbReference>
<dbReference type="Pfam" id="PF00016">
    <property type="entry name" value="RuBisCO_large"/>
    <property type="match status" value="1"/>
</dbReference>
<dbReference type="Pfam" id="PF02788">
    <property type="entry name" value="RuBisCO_large_N"/>
    <property type="match status" value="1"/>
</dbReference>
<dbReference type="SFLD" id="SFLDG01052">
    <property type="entry name" value="RuBisCO"/>
    <property type="match status" value="1"/>
</dbReference>
<dbReference type="SFLD" id="SFLDS00014">
    <property type="entry name" value="RuBisCO"/>
    <property type="match status" value="1"/>
</dbReference>
<dbReference type="SFLD" id="SFLDG00301">
    <property type="entry name" value="RuBisCO-like_proteins"/>
    <property type="match status" value="1"/>
</dbReference>
<dbReference type="SUPFAM" id="SSF51649">
    <property type="entry name" value="RuBisCo, C-terminal domain"/>
    <property type="match status" value="1"/>
</dbReference>
<dbReference type="SUPFAM" id="SSF54966">
    <property type="entry name" value="RuBisCO, large subunit, small (N-terminal) domain"/>
    <property type="match status" value="1"/>
</dbReference>
<dbReference type="PROSITE" id="PS00157">
    <property type="entry name" value="RUBISCO_LARGE"/>
    <property type="match status" value="1"/>
</dbReference>
<keyword id="KW-0113">Calvin cycle</keyword>
<keyword id="KW-0120">Carbon dioxide fixation</keyword>
<keyword id="KW-0150">Chloroplast</keyword>
<keyword id="KW-1015">Disulfide bond</keyword>
<keyword id="KW-0456">Lyase</keyword>
<keyword id="KW-0460">Magnesium</keyword>
<keyword id="KW-0479">Metal-binding</keyword>
<keyword id="KW-0488">Methylation</keyword>
<keyword id="KW-0503">Monooxygenase</keyword>
<keyword id="KW-0560">Oxidoreductase</keyword>
<keyword id="KW-0601">Photorespiration</keyword>
<keyword id="KW-0602">Photosynthesis</keyword>
<keyword id="KW-0934">Plastid</keyword>
<geneLocation type="chloroplast"/>
<feature type="chain" id="PRO_0000062513" description="Ribulose bisphosphate carboxylase large chain">
    <location>
        <begin position="1" status="less than"/>
        <end position="455" status="greater than"/>
    </location>
</feature>
<feature type="active site" description="Proton acceptor" evidence="1">
    <location>
        <position position="166"/>
    </location>
</feature>
<feature type="active site" description="Proton acceptor" evidence="1">
    <location>
        <position position="285"/>
    </location>
</feature>
<feature type="binding site" description="in homodimeric partner" evidence="1">
    <location>
        <position position="114"/>
    </location>
    <ligand>
        <name>substrate</name>
    </ligand>
</feature>
<feature type="binding site" evidence="1">
    <location>
        <position position="164"/>
    </location>
    <ligand>
        <name>substrate</name>
    </ligand>
</feature>
<feature type="binding site" evidence="1">
    <location>
        <position position="168"/>
    </location>
    <ligand>
        <name>substrate</name>
    </ligand>
</feature>
<feature type="binding site" description="via carbamate group" evidence="1">
    <location>
        <position position="192"/>
    </location>
    <ligand>
        <name>Mg(2+)</name>
        <dbReference type="ChEBI" id="CHEBI:18420"/>
    </ligand>
</feature>
<feature type="binding site" evidence="1">
    <location>
        <position position="194"/>
    </location>
    <ligand>
        <name>Mg(2+)</name>
        <dbReference type="ChEBI" id="CHEBI:18420"/>
    </ligand>
</feature>
<feature type="binding site" evidence="1">
    <location>
        <position position="195"/>
    </location>
    <ligand>
        <name>Mg(2+)</name>
        <dbReference type="ChEBI" id="CHEBI:18420"/>
    </ligand>
</feature>
<feature type="binding site" evidence="1">
    <location>
        <position position="286"/>
    </location>
    <ligand>
        <name>substrate</name>
    </ligand>
</feature>
<feature type="binding site" evidence="1">
    <location>
        <position position="318"/>
    </location>
    <ligand>
        <name>substrate</name>
    </ligand>
</feature>
<feature type="binding site" evidence="1">
    <location>
        <position position="370"/>
    </location>
    <ligand>
        <name>substrate</name>
    </ligand>
</feature>
<feature type="site" description="Transition state stabilizer" evidence="1">
    <location>
        <position position="325"/>
    </location>
</feature>
<feature type="modified residue" description="N6,N6,N6-trimethyllysine" evidence="1">
    <location>
        <position position="5"/>
    </location>
</feature>
<feature type="modified residue" description="N6-carboxylysine" evidence="1">
    <location>
        <position position="192"/>
    </location>
</feature>
<feature type="disulfide bond" description="Interchain; in linked form" evidence="1">
    <location>
        <position position="238"/>
    </location>
</feature>
<feature type="non-terminal residue">
    <location>
        <position position="1"/>
    </location>
</feature>
<feature type="non-terminal residue">
    <location>
        <position position="455"/>
    </location>
</feature>
<reference key="1">
    <citation type="journal article" date="1995" name="Bot. Acta">
        <title>Molecular phylogeny of the Papilionoideae (family Leguminosae): rbcL sequences versus chemical taxonomy.</title>
        <authorList>
            <person name="Kaess E."/>
            <person name="Wink M."/>
        </authorList>
    </citation>
    <scope>NUCLEOTIDE SEQUENCE [GENOMIC DNA]</scope>
    <source>
        <tissue>Leaf</tissue>
    </source>
</reference>
<proteinExistence type="inferred from homology"/>
<sequence length="455" mass="50302">SVGFKAGVKDYKLTYYTPDYETKDTDILAAFRVTPQPGVPPEEAGAAVAAESSTGTWTTVWTDGLTSLDRYKGRCYHIEPVAGEESQFIAYVAYPLDLFEEGSVTNMFTSIVGNVFGFKALRALRLEDLRIPNAYVKTFQGPPHGIQVERDKLNKYGRPLLGCTIKPKLGLSAKNYGRAVYECLRGGLDFTKDDENVNSQPFMRWRDRFLFCAEALYKAQAETGEIKGHYLNATAGTCEEMIKRAVFARELGVPIVMHDYLTGGFTANTTLAHYCRDNGLLLHIHRAMHAVIDRQKNHGMHFRVLAKALRLSGGDHIHSGTVVGKLEGEREITLGFVDLLRDDFVEKDRSRGIYFTQDWVSLPGVLPVASGGIHVWHMPALTEIFGDDSVLQFGGGTLGHPWGNAPGAVANRVALEACVQARNEGRDLASEGNQIIREASKWSPELAAACEVWKE</sequence>
<protein>
    <recommendedName>
        <fullName evidence="1">Ribulose bisphosphate carboxylase large chain</fullName>
        <shortName evidence="1">RuBisCO large subunit</shortName>
        <ecNumber evidence="1">4.1.1.39</ecNumber>
    </recommendedName>
</protein>
<evidence type="ECO:0000255" key="1">
    <source>
        <dbReference type="HAMAP-Rule" id="MF_01338"/>
    </source>
</evidence>
<name>RBL_LUPCO</name>
<comment type="function">
    <text evidence="1">RuBisCO catalyzes two reactions: the carboxylation of D-ribulose 1,5-bisphosphate, the primary event in carbon dioxide fixation, as well as the oxidative fragmentation of the pentose substrate in the photorespiration process. Both reactions occur simultaneously and in competition at the same active site.</text>
</comment>
<comment type="catalytic activity">
    <reaction evidence="1">
        <text>2 (2R)-3-phosphoglycerate + 2 H(+) = D-ribulose 1,5-bisphosphate + CO2 + H2O</text>
        <dbReference type="Rhea" id="RHEA:23124"/>
        <dbReference type="ChEBI" id="CHEBI:15377"/>
        <dbReference type="ChEBI" id="CHEBI:15378"/>
        <dbReference type="ChEBI" id="CHEBI:16526"/>
        <dbReference type="ChEBI" id="CHEBI:57870"/>
        <dbReference type="ChEBI" id="CHEBI:58272"/>
        <dbReference type="EC" id="4.1.1.39"/>
    </reaction>
</comment>
<comment type="catalytic activity">
    <reaction evidence="1">
        <text>D-ribulose 1,5-bisphosphate + O2 = 2-phosphoglycolate + (2R)-3-phosphoglycerate + 2 H(+)</text>
        <dbReference type="Rhea" id="RHEA:36631"/>
        <dbReference type="ChEBI" id="CHEBI:15378"/>
        <dbReference type="ChEBI" id="CHEBI:15379"/>
        <dbReference type="ChEBI" id="CHEBI:57870"/>
        <dbReference type="ChEBI" id="CHEBI:58033"/>
        <dbReference type="ChEBI" id="CHEBI:58272"/>
    </reaction>
</comment>
<comment type="cofactor">
    <cofactor evidence="1">
        <name>Mg(2+)</name>
        <dbReference type="ChEBI" id="CHEBI:18420"/>
    </cofactor>
    <text evidence="1">Binds 1 Mg(2+) ion per subunit.</text>
</comment>
<comment type="subunit">
    <text evidence="1">Heterohexadecamer of 8 large chains and 8 small chains; disulfide-linked. The disulfide link is formed within the large subunit homodimers.</text>
</comment>
<comment type="subcellular location">
    <subcellularLocation>
        <location>Plastid</location>
        <location>Chloroplast</location>
    </subcellularLocation>
</comment>
<comment type="PTM">
    <text evidence="1">The disulfide bond which can form in the large chain dimeric partners within the hexadecamer appears to be associated with oxidative stress and protein turnover.</text>
</comment>
<comment type="miscellaneous">
    <text evidence="1">The basic functional RuBisCO is composed of a large chain homodimer in a 'head-to-tail' conformation. In form I RuBisCO this homodimer is arranged in a barrel-like tetramer with the small subunits forming a tetrameric 'cap' on each end of the 'barrel'.</text>
</comment>
<comment type="similarity">
    <text evidence="1">Belongs to the RuBisCO large chain family. Type I subfamily.</text>
</comment>